<evidence type="ECO:0000255" key="1">
    <source>
        <dbReference type="HAMAP-Rule" id="MF_00372"/>
    </source>
</evidence>
<evidence type="ECO:0000305" key="2"/>
<keyword id="KW-0963">Cytoplasm</keyword>
<keyword id="KW-0369">Histidine metabolism</keyword>
<keyword id="KW-0378">Hydrolase</keyword>
<keyword id="KW-0408">Iron</keyword>
<keyword id="KW-0479">Metal-binding</keyword>
<keyword id="KW-0862">Zinc</keyword>
<organism>
    <name type="scientific">Streptococcus pyogenes serotype M28 (strain MGAS6180)</name>
    <dbReference type="NCBI Taxonomy" id="319701"/>
    <lineage>
        <taxon>Bacteria</taxon>
        <taxon>Bacillati</taxon>
        <taxon>Bacillota</taxon>
        <taxon>Bacilli</taxon>
        <taxon>Lactobacillales</taxon>
        <taxon>Streptococcaceae</taxon>
        <taxon>Streptococcus</taxon>
    </lineage>
</organism>
<name>HUTI_STRPM</name>
<protein>
    <recommendedName>
        <fullName evidence="1">Imidazolonepropionase</fullName>
        <ecNumber evidence="1">3.5.2.7</ecNumber>
    </recommendedName>
    <alternativeName>
        <fullName evidence="1">Imidazolone-5-propionate hydrolase</fullName>
    </alternativeName>
</protein>
<comment type="function">
    <text evidence="1">Catalyzes the hydrolytic cleavage of the carbon-nitrogen bond in imidazolone-5-propanoate to yield N-formimidoyl-L-glutamate. It is the third step in the universal histidine degradation pathway.</text>
</comment>
<comment type="catalytic activity">
    <reaction evidence="1">
        <text>4-imidazolone-5-propanoate + H2O = N-formimidoyl-L-glutamate</text>
        <dbReference type="Rhea" id="RHEA:23660"/>
        <dbReference type="ChEBI" id="CHEBI:15377"/>
        <dbReference type="ChEBI" id="CHEBI:58928"/>
        <dbReference type="ChEBI" id="CHEBI:77893"/>
        <dbReference type="EC" id="3.5.2.7"/>
    </reaction>
</comment>
<comment type="cofactor">
    <cofactor evidence="1">
        <name>Zn(2+)</name>
        <dbReference type="ChEBI" id="CHEBI:29105"/>
    </cofactor>
    <cofactor evidence="1">
        <name>Fe(3+)</name>
        <dbReference type="ChEBI" id="CHEBI:29034"/>
    </cofactor>
    <text evidence="1">Binds 1 zinc or iron ion per subunit.</text>
</comment>
<comment type="pathway">
    <text evidence="1">Amino-acid degradation; L-histidine degradation into L-glutamate; N-formimidoyl-L-glutamate from L-histidine: step 3/3.</text>
</comment>
<comment type="subcellular location">
    <subcellularLocation>
        <location evidence="1">Cytoplasm</location>
    </subcellularLocation>
</comment>
<comment type="similarity">
    <text evidence="1">Belongs to the metallo-dependent hydrolases superfamily. HutI family.</text>
</comment>
<comment type="sequence caution" evidence="2">
    <conflict type="erroneous initiation">
        <sequence resource="EMBL-CDS" id="AAX72864"/>
    </conflict>
</comment>
<gene>
    <name evidence="1" type="primary">hutI</name>
    <name type="ordered locus">M28_Spy1754</name>
</gene>
<reference key="1">
    <citation type="journal article" date="2005" name="J. Infect. Dis.">
        <title>Genome sequence of a serotype M28 strain of group A Streptococcus: potential new insights into puerperal sepsis and bacterial disease specificity.</title>
        <authorList>
            <person name="Green N.M."/>
            <person name="Zhang S."/>
            <person name="Porcella S.F."/>
            <person name="Nagiec M.J."/>
            <person name="Barbian K.D."/>
            <person name="Beres S.B."/>
            <person name="Lefebvre R.B."/>
            <person name="Musser J.M."/>
        </authorList>
    </citation>
    <scope>NUCLEOTIDE SEQUENCE [LARGE SCALE GENOMIC DNA]</scope>
    <source>
        <strain>MGAS6180</strain>
    </source>
</reference>
<proteinExistence type="inferred from homology"/>
<dbReference type="EC" id="3.5.2.7" evidence="1"/>
<dbReference type="EMBL" id="CP000056">
    <property type="protein sequence ID" value="AAX72864.1"/>
    <property type="status" value="ALT_INIT"/>
    <property type="molecule type" value="Genomic_DNA"/>
</dbReference>
<dbReference type="RefSeq" id="WP_002982296.1">
    <property type="nucleotide sequence ID" value="NC_007296.2"/>
</dbReference>
<dbReference type="SMR" id="Q48QZ6"/>
<dbReference type="KEGG" id="spb:M28_Spy1754"/>
<dbReference type="HOGENOM" id="CLU_041647_0_1_9"/>
<dbReference type="UniPathway" id="UPA00379">
    <property type="reaction ID" value="UER00551"/>
</dbReference>
<dbReference type="GO" id="GO:0005737">
    <property type="term" value="C:cytoplasm"/>
    <property type="evidence" value="ECO:0007669"/>
    <property type="project" value="UniProtKB-SubCell"/>
</dbReference>
<dbReference type="GO" id="GO:0050480">
    <property type="term" value="F:imidazolonepropionase activity"/>
    <property type="evidence" value="ECO:0007669"/>
    <property type="project" value="UniProtKB-UniRule"/>
</dbReference>
<dbReference type="GO" id="GO:0005506">
    <property type="term" value="F:iron ion binding"/>
    <property type="evidence" value="ECO:0007669"/>
    <property type="project" value="UniProtKB-UniRule"/>
</dbReference>
<dbReference type="GO" id="GO:0008270">
    <property type="term" value="F:zinc ion binding"/>
    <property type="evidence" value="ECO:0007669"/>
    <property type="project" value="UniProtKB-UniRule"/>
</dbReference>
<dbReference type="GO" id="GO:0019556">
    <property type="term" value="P:L-histidine catabolic process to glutamate and formamide"/>
    <property type="evidence" value="ECO:0007669"/>
    <property type="project" value="UniProtKB-UniPathway"/>
</dbReference>
<dbReference type="GO" id="GO:0019557">
    <property type="term" value="P:L-histidine catabolic process to glutamate and formate"/>
    <property type="evidence" value="ECO:0007669"/>
    <property type="project" value="UniProtKB-UniPathway"/>
</dbReference>
<dbReference type="CDD" id="cd01296">
    <property type="entry name" value="Imidazolone-5PH"/>
    <property type="match status" value="1"/>
</dbReference>
<dbReference type="FunFam" id="3.20.20.140:FF:000007">
    <property type="entry name" value="Imidazolonepropionase"/>
    <property type="match status" value="1"/>
</dbReference>
<dbReference type="Gene3D" id="3.20.20.140">
    <property type="entry name" value="Metal-dependent hydrolases"/>
    <property type="match status" value="1"/>
</dbReference>
<dbReference type="Gene3D" id="2.30.40.10">
    <property type="entry name" value="Urease, subunit C, domain 1"/>
    <property type="match status" value="1"/>
</dbReference>
<dbReference type="HAMAP" id="MF_00372">
    <property type="entry name" value="HutI"/>
    <property type="match status" value="1"/>
</dbReference>
<dbReference type="InterPro" id="IPR006680">
    <property type="entry name" value="Amidohydro-rel"/>
</dbReference>
<dbReference type="InterPro" id="IPR005920">
    <property type="entry name" value="HutI"/>
</dbReference>
<dbReference type="InterPro" id="IPR011059">
    <property type="entry name" value="Metal-dep_hydrolase_composite"/>
</dbReference>
<dbReference type="InterPro" id="IPR032466">
    <property type="entry name" value="Metal_Hydrolase"/>
</dbReference>
<dbReference type="NCBIfam" id="TIGR01224">
    <property type="entry name" value="hutI"/>
    <property type="match status" value="1"/>
</dbReference>
<dbReference type="PANTHER" id="PTHR42752">
    <property type="entry name" value="IMIDAZOLONEPROPIONASE"/>
    <property type="match status" value="1"/>
</dbReference>
<dbReference type="PANTHER" id="PTHR42752:SF1">
    <property type="entry name" value="IMIDAZOLONEPROPIONASE-RELATED"/>
    <property type="match status" value="1"/>
</dbReference>
<dbReference type="Pfam" id="PF01979">
    <property type="entry name" value="Amidohydro_1"/>
    <property type="match status" value="1"/>
</dbReference>
<dbReference type="SUPFAM" id="SSF51338">
    <property type="entry name" value="Composite domain of metallo-dependent hydrolases"/>
    <property type="match status" value="1"/>
</dbReference>
<dbReference type="SUPFAM" id="SSF51556">
    <property type="entry name" value="Metallo-dependent hydrolases"/>
    <property type="match status" value="1"/>
</dbReference>
<feature type="chain" id="PRO_0000306525" description="Imidazolonepropionase">
    <location>
        <begin position="1"/>
        <end position="421"/>
    </location>
</feature>
<feature type="binding site" evidence="1">
    <location>
        <position position="81"/>
    </location>
    <ligand>
        <name>Fe(3+)</name>
        <dbReference type="ChEBI" id="CHEBI:29034"/>
    </ligand>
</feature>
<feature type="binding site" evidence="1">
    <location>
        <position position="81"/>
    </location>
    <ligand>
        <name>Zn(2+)</name>
        <dbReference type="ChEBI" id="CHEBI:29105"/>
    </ligand>
</feature>
<feature type="binding site" evidence="1">
    <location>
        <position position="83"/>
    </location>
    <ligand>
        <name>Fe(3+)</name>
        <dbReference type="ChEBI" id="CHEBI:29034"/>
    </ligand>
</feature>
<feature type="binding site" evidence="1">
    <location>
        <position position="83"/>
    </location>
    <ligand>
        <name>Zn(2+)</name>
        <dbReference type="ChEBI" id="CHEBI:29105"/>
    </ligand>
</feature>
<feature type="binding site" evidence="1">
    <location>
        <position position="90"/>
    </location>
    <ligand>
        <name>4-imidazolone-5-propanoate</name>
        <dbReference type="ChEBI" id="CHEBI:77893"/>
    </ligand>
</feature>
<feature type="binding site" evidence="1">
    <location>
        <position position="153"/>
    </location>
    <ligand>
        <name>4-imidazolone-5-propanoate</name>
        <dbReference type="ChEBI" id="CHEBI:77893"/>
    </ligand>
</feature>
<feature type="binding site" evidence="1">
    <location>
        <position position="153"/>
    </location>
    <ligand>
        <name>N-formimidoyl-L-glutamate</name>
        <dbReference type="ChEBI" id="CHEBI:58928"/>
    </ligand>
</feature>
<feature type="binding site" evidence="1">
    <location>
        <position position="186"/>
    </location>
    <ligand>
        <name>4-imidazolone-5-propanoate</name>
        <dbReference type="ChEBI" id="CHEBI:77893"/>
    </ligand>
</feature>
<feature type="binding site" evidence="1">
    <location>
        <position position="251"/>
    </location>
    <ligand>
        <name>Fe(3+)</name>
        <dbReference type="ChEBI" id="CHEBI:29034"/>
    </ligand>
</feature>
<feature type="binding site" evidence="1">
    <location>
        <position position="251"/>
    </location>
    <ligand>
        <name>Zn(2+)</name>
        <dbReference type="ChEBI" id="CHEBI:29105"/>
    </ligand>
</feature>
<feature type="binding site" evidence="1">
    <location>
        <position position="254"/>
    </location>
    <ligand>
        <name>4-imidazolone-5-propanoate</name>
        <dbReference type="ChEBI" id="CHEBI:77893"/>
    </ligand>
</feature>
<feature type="binding site" evidence="1">
    <location>
        <position position="326"/>
    </location>
    <ligand>
        <name>Fe(3+)</name>
        <dbReference type="ChEBI" id="CHEBI:29034"/>
    </ligand>
</feature>
<feature type="binding site" evidence="1">
    <location>
        <position position="326"/>
    </location>
    <ligand>
        <name>Zn(2+)</name>
        <dbReference type="ChEBI" id="CHEBI:29105"/>
    </ligand>
</feature>
<feature type="binding site" evidence="1">
    <location>
        <position position="328"/>
    </location>
    <ligand>
        <name>N-formimidoyl-L-glutamate</name>
        <dbReference type="ChEBI" id="CHEBI:58928"/>
    </ligand>
</feature>
<feature type="binding site" evidence="1">
    <location>
        <position position="330"/>
    </location>
    <ligand>
        <name>N-formimidoyl-L-glutamate</name>
        <dbReference type="ChEBI" id="CHEBI:58928"/>
    </ligand>
</feature>
<feature type="binding site" evidence="1">
    <location>
        <position position="331"/>
    </location>
    <ligand>
        <name>4-imidazolone-5-propanoate</name>
        <dbReference type="ChEBI" id="CHEBI:77893"/>
    </ligand>
</feature>
<sequence>MVADVLLTHFNQLFCLNDPGHPLTGQEMKKATIVEDGYIAIKDGLIVALGSGEPDAELVGPQTIMRSYKGKIATPGIIDCHTHLVYGGSREHEFAKKLAGVSYLDILAQGGGILSTVRATRSASFDNLYQKSKRLLDYMLLHGVTTVEAKSGYGLDWETEKRQLDVVAALEKDHPIDLVSTFMAAHAIPEEYKGNPKAYLDVIIKDMLPVVKEENLAEFCDIFCEKNVFTADESRYLLSKAKEMGFKLRIHADEIASIGGVDVAAELSAVSAEHLMMITDDGIAKLIGAGVIGNLLPATTFSLMEDTYAPARKMIDAGMAITLSTDSNPGSCPTANMQFVMQLGCFMLRLTPIEVLNAVTINAAYSVNRQERVGSLTVGKEADIAIFDAPNIDYPFYFFATNLIHQVYKKGQLTVDRGRIL</sequence>
<accession>Q48QZ6</accession>